<accession>Q9CGC2</accession>
<gene>
    <name evidence="1" type="primary">nanE</name>
    <name type="ordered locus">LL1175</name>
    <name type="ORF">L191486</name>
</gene>
<proteinExistence type="inferred from homology"/>
<sequence length="231" mass="25463">MKKEVFLDKVKNGIIVSCQALPGEALYSEKGGIMPLMAKAAAQAGAVGIRANSVRDIKEIQKIVDLPIIGIIKRDYPPQKPFITATMKEIDELVATSCEVIALDCTSRERYDGLTINEFIKSIKEKYPNQLLMADCSTFEECKNAYEAGVDFVGTTLSGYTDESPKQDEPDFTLLEKLVEEKIPVIAEGRIHSPEQAKRVYDIGVDAMVIGGAITRPFEIATRFIKAIGEK</sequence>
<protein>
    <recommendedName>
        <fullName evidence="1">Putative N-acetylmannosamine-6-phosphate 2-epimerase</fullName>
        <ecNumber evidence="1">5.1.3.9</ecNumber>
    </recommendedName>
    <alternativeName>
        <fullName evidence="1">ManNAc-6-P epimerase</fullName>
    </alternativeName>
</protein>
<keyword id="KW-0119">Carbohydrate metabolism</keyword>
<keyword id="KW-0413">Isomerase</keyword>
<keyword id="KW-1185">Reference proteome</keyword>
<comment type="function">
    <text evidence="1">Converts N-acetylmannosamine-6-phosphate (ManNAc-6-P) to N-acetylglucosamine-6-phosphate (GlcNAc-6-P).</text>
</comment>
<comment type="catalytic activity">
    <reaction evidence="1">
        <text>an N-acyl-D-glucosamine 6-phosphate = an N-acyl-D-mannosamine 6-phosphate</text>
        <dbReference type="Rhea" id="RHEA:23932"/>
        <dbReference type="ChEBI" id="CHEBI:57599"/>
        <dbReference type="ChEBI" id="CHEBI:57666"/>
        <dbReference type="EC" id="5.1.3.9"/>
    </reaction>
</comment>
<comment type="pathway">
    <text evidence="1">Amino-sugar metabolism; N-acetylneuraminate degradation; D-fructose 6-phosphate from N-acetylneuraminate: step 3/5.</text>
</comment>
<comment type="similarity">
    <text evidence="1">Belongs to the NanE family.</text>
</comment>
<comment type="sequence caution" evidence="2">
    <conflict type="erroneous initiation">
        <sequence resource="EMBL-CDS" id="AAK05273"/>
    </conflict>
</comment>
<evidence type="ECO:0000255" key="1">
    <source>
        <dbReference type="HAMAP-Rule" id="MF_01235"/>
    </source>
</evidence>
<evidence type="ECO:0000305" key="2"/>
<name>NANE_LACLA</name>
<dbReference type="EC" id="5.1.3.9" evidence="1"/>
<dbReference type="EMBL" id="AE005176">
    <property type="protein sequence ID" value="AAK05273.1"/>
    <property type="status" value="ALT_INIT"/>
    <property type="molecule type" value="Genomic_DNA"/>
</dbReference>
<dbReference type="PIR" id="G86771">
    <property type="entry name" value="G86771"/>
</dbReference>
<dbReference type="RefSeq" id="NP_267331.1">
    <property type="nucleotide sequence ID" value="NC_002662.1"/>
</dbReference>
<dbReference type="RefSeq" id="WP_003130140.1">
    <property type="nucleotide sequence ID" value="NC_002662.1"/>
</dbReference>
<dbReference type="SMR" id="Q9CGC2"/>
<dbReference type="PaxDb" id="272623-L191486"/>
<dbReference type="EnsemblBacteria" id="AAK05273">
    <property type="protein sequence ID" value="AAK05273"/>
    <property type="gene ID" value="L191486"/>
</dbReference>
<dbReference type="KEGG" id="lla:L191486"/>
<dbReference type="PATRIC" id="fig|272623.7.peg.1259"/>
<dbReference type="eggNOG" id="COG3010">
    <property type="taxonomic scope" value="Bacteria"/>
</dbReference>
<dbReference type="HOGENOM" id="CLU_086300_1_0_9"/>
<dbReference type="OrthoDB" id="9781704at2"/>
<dbReference type="UniPathway" id="UPA00629">
    <property type="reaction ID" value="UER00682"/>
</dbReference>
<dbReference type="Proteomes" id="UP000002196">
    <property type="component" value="Chromosome"/>
</dbReference>
<dbReference type="GO" id="GO:0005829">
    <property type="term" value="C:cytosol"/>
    <property type="evidence" value="ECO:0007669"/>
    <property type="project" value="TreeGrafter"/>
</dbReference>
<dbReference type="GO" id="GO:0047465">
    <property type="term" value="F:N-acylglucosamine-6-phosphate 2-epimerase activity"/>
    <property type="evidence" value="ECO:0007669"/>
    <property type="project" value="UniProtKB-EC"/>
</dbReference>
<dbReference type="GO" id="GO:0005975">
    <property type="term" value="P:carbohydrate metabolic process"/>
    <property type="evidence" value="ECO:0007669"/>
    <property type="project" value="UniProtKB-UniRule"/>
</dbReference>
<dbReference type="GO" id="GO:0006053">
    <property type="term" value="P:N-acetylmannosamine catabolic process"/>
    <property type="evidence" value="ECO:0007669"/>
    <property type="project" value="TreeGrafter"/>
</dbReference>
<dbReference type="GO" id="GO:0019262">
    <property type="term" value="P:N-acetylneuraminate catabolic process"/>
    <property type="evidence" value="ECO:0007669"/>
    <property type="project" value="UniProtKB-UniRule"/>
</dbReference>
<dbReference type="CDD" id="cd04729">
    <property type="entry name" value="NanE"/>
    <property type="match status" value="1"/>
</dbReference>
<dbReference type="FunFam" id="3.20.20.70:FF:000035">
    <property type="entry name" value="Putative N-acetylmannosamine-6-phosphate 2-epimerase"/>
    <property type="match status" value="1"/>
</dbReference>
<dbReference type="Gene3D" id="3.20.20.70">
    <property type="entry name" value="Aldolase class I"/>
    <property type="match status" value="1"/>
</dbReference>
<dbReference type="HAMAP" id="MF_01235">
    <property type="entry name" value="ManNAc6P_epimer"/>
    <property type="match status" value="1"/>
</dbReference>
<dbReference type="InterPro" id="IPR013785">
    <property type="entry name" value="Aldolase_TIM"/>
</dbReference>
<dbReference type="InterPro" id="IPR007260">
    <property type="entry name" value="NanE"/>
</dbReference>
<dbReference type="InterPro" id="IPR011060">
    <property type="entry name" value="RibuloseP-bd_barrel"/>
</dbReference>
<dbReference type="NCBIfam" id="NF002231">
    <property type="entry name" value="PRK01130.1"/>
    <property type="match status" value="1"/>
</dbReference>
<dbReference type="PANTHER" id="PTHR36204">
    <property type="entry name" value="N-ACETYLMANNOSAMINE-6-PHOSPHATE 2-EPIMERASE-RELATED"/>
    <property type="match status" value="1"/>
</dbReference>
<dbReference type="PANTHER" id="PTHR36204:SF1">
    <property type="entry name" value="N-ACETYLMANNOSAMINE-6-PHOSPHATE 2-EPIMERASE-RELATED"/>
    <property type="match status" value="1"/>
</dbReference>
<dbReference type="Pfam" id="PF04131">
    <property type="entry name" value="NanE"/>
    <property type="match status" value="1"/>
</dbReference>
<dbReference type="SUPFAM" id="SSF51366">
    <property type="entry name" value="Ribulose-phoshate binding barrel"/>
    <property type="match status" value="1"/>
</dbReference>
<organism>
    <name type="scientific">Lactococcus lactis subsp. lactis (strain IL1403)</name>
    <name type="common">Streptococcus lactis</name>
    <dbReference type="NCBI Taxonomy" id="272623"/>
    <lineage>
        <taxon>Bacteria</taxon>
        <taxon>Bacillati</taxon>
        <taxon>Bacillota</taxon>
        <taxon>Bacilli</taxon>
        <taxon>Lactobacillales</taxon>
        <taxon>Streptococcaceae</taxon>
        <taxon>Lactococcus</taxon>
    </lineage>
</organism>
<feature type="chain" id="PRO_0000179779" description="Putative N-acetylmannosamine-6-phosphate 2-epimerase">
    <location>
        <begin position="1"/>
        <end position="231"/>
    </location>
</feature>
<reference key="1">
    <citation type="journal article" date="2001" name="Genome Res.">
        <title>The complete genome sequence of the lactic acid bacterium Lactococcus lactis ssp. lactis IL1403.</title>
        <authorList>
            <person name="Bolotin A."/>
            <person name="Wincker P."/>
            <person name="Mauger S."/>
            <person name="Jaillon O."/>
            <person name="Malarme K."/>
            <person name="Weissenbach J."/>
            <person name="Ehrlich S.D."/>
            <person name="Sorokin A."/>
        </authorList>
    </citation>
    <scope>NUCLEOTIDE SEQUENCE [LARGE SCALE GENOMIC DNA]</scope>
    <source>
        <strain>IL1403</strain>
    </source>
</reference>